<organism>
    <name type="scientific">Acidianus filamentous virus 2 (isolate Italy/Pozzuoli)</name>
    <name type="common">AFV-2</name>
    <dbReference type="NCBI Taxonomy" id="654910"/>
    <lineage>
        <taxon>Viruses</taxon>
        <taxon>Adnaviria</taxon>
        <taxon>Zilligvirae</taxon>
        <taxon>Taleaviricota</taxon>
        <taxon>Tokiviricetes</taxon>
        <taxon>Ligamenvirales</taxon>
        <taxon>Lipothrixviridae</taxon>
        <taxon>Deltalipothrixvirus</taxon>
        <taxon>Acidianus filamentous virus 2</taxon>
    </lineage>
</organism>
<protein>
    <recommendedName>
        <fullName>Uncharacterized protein ORF100b</fullName>
    </recommendedName>
</protein>
<keyword id="KW-1185">Reference proteome</keyword>
<proteinExistence type="predicted"/>
<reference key="1">
    <citation type="journal article" date="2005" name="J. Bacteriol.">
        <title>Structure and genome organization of AFV2, a novel archaeal lipothrixvirus with unusual terminal and core structures.</title>
        <authorList>
            <person name="Haring M."/>
            <person name="Vestergaard G."/>
            <person name="Brugger K."/>
            <person name="Rachel R."/>
            <person name="Garrett R.A."/>
            <person name="Prangishvili D."/>
        </authorList>
    </citation>
    <scope>NUCLEOTIDE SEQUENCE [GENOMIC DNA]</scope>
</reference>
<organismHost>
    <name type="scientific">Acidianus sp. F28</name>
    <dbReference type="NCBI Taxonomy" id="315458"/>
</organismHost>
<gene>
    <name type="ORF">ORF100b</name>
</gene>
<dbReference type="EMBL" id="AJ854042">
    <property type="protein sequence ID" value="CAH69391.1"/>
    <property type="molecule type" value="Genomic_DNA"/>
</dbReference>
<dbReference type="RefSeq" id="YP_001496929.1">
    <property type="nucleotide sequence ID" value="NC_009884.1"/>
</dbReference>
<dbReference type="SMR" id="Q573G5"/>
<dbReference type="KEGG" id="vg:5656077"/>
<dbReference type="Proteomes" id="UP000006364">
    <property type="component" value="Genome"/>
</dbReference>
<dbReference type="GO" id="GO:0006355">
    <property type="term" value="P:regulation of DNA-templated transcription"/>
    <property type="evidence" value="ECO:0007669"/>
    <property type="project" value="InterPro"/>
</dbReference>
<dbReference type="Gene3D" id="1.10.1220.10">
    <property type="entry name" value="Met repressor-like"/>
    <property type="match status" value="1"/>
</dbReference>
<dbReference type="InterPro" id="IPR013321">
    <property type="entry name" value="Arc_rbn_hlx_hlx"/>
</dbReference>
<accession>Q573G5</accession>
<sequence>MIITIEEEVYNNLKKRAEKEEISIPAIVRKFIVSYFNLEDSTKDYKRKEPGESVIIVNGKKYFRINCKMERQNELYIKSELKKKGISVNKLLKELIIVTV</sequence>
<feature type="chain" id="PRO_0000384498" description="Uncharacterized protein ORF100b">
    <location>
        <begin position="1"/>
        <end position="100"/>
    </location>
</feature>
<name>Y100B_AFV2P</name>